<protein>
    <recommendedName>
        <fullName>NAD(P)H-flavin reductase</fullName>
        <ecNumber evidence="3">1.5.1.41</ecNumber>
    </recommendedName>
    <alternativeName>
        <fullName>Aquacobalamin reductase</fullName>
    </alternativeName>
    <alternativeName>
        <fullName>FMN reductase</fullName>
    </alternativeName>
    <alternativeName>
        <fullName>Ferrisiderophore reductase C</fullName>
    </alternativeName>
    <alternativeName>
        <fullName>NAD(P)H:flavin oxidoreductase</fullName>
    </alternativeName>
    <alternativeName>
        <fullName>Riboflavin reductase [NAD(P)H]</fullName>
    </alternativeName>
</protein>
<proteinExistence type="inferred from homology"/>
<accession>P0AEN2</accession>
<accession>P23486</accession>
<accession>P76768</accession>
<reference key="1">
    <citation type="journal article" date="2002" name="Proc. Natl. Acad. Sci. U.S.A.">
        <title>Extensive mosaic structure revealed by the complete genome sequence of uropathogenic Escherichia coli.</title>
        <authorList>
            <person name="Welch R.A."/>
            <person name="Burland V."/>
            <person name="Plunkett G. III"/>
            <person name="Redford P."/>
            <person name="Roesch P."/>
            <person name="Rasko D."/>
            <person name="Buckles E.L."/>
            <person name="Liou S.-R."/>
            <person name="Boutin A."/>
            <person name="Hackett J."/>
            <person name="Stroud D."/>
            <person name="Mayhew G.F."/>
            <person name="Rose D.J."/>
            <person name="Zhou S."/>
            <person name="Schwartz D.C."/>
            <person name="Perna N.T."/>
            <person name="Mobley H.L.T."/>
            <person name="Donnenberg M.S."/>
            <person name="Blattner F.R."/>
        </authorList>
    </citation>
    <scope>NUCLEOTIDE SEQUENCE [LARGE SCALE GENOMIC DNA]</scope>
    <source>
        <strain>CFT073 / ATCC 700928 / UPEC</strain>
    </source>
</reference>
<sequence>MTTLSCKVTSVEAITDTVYRVRIVPDAAFSFRAGQYLMVVMDERDKRPFSMASTPDEKGFIELHIGASEINLYAKAVMDRILKDHQIVVDIPHGEAWLRDDEERPMILIAGGTGFSYARSILLTALARNPNRDITIYWGGREEQHLYDLCELEALSLKHPGLQVVPVVEQPEAGWRGRTGTVLTAVLQDHGTLAEHDIYIAGRFEMAKIARDLFCSERNAREDRLFGDAFAFI</sequence>
<keyword id="KW-0274">FAD</keyword>
<keyword id="KW-0285">Flavoprotein</keyword>
<keyword id="KW-0288">FMN</keyword>
<keyword id="KW-0406">Ion transport</keyword>
<keyword id="KW-0408">Iron</keyword>
<keyword id="KW-0410">Iron transport</keyword>
<keyword id="KW-0520">NAD</keyword>
<keyword id="KW-0521">NADP</keyword>
<keyword id="KW-0560">Oxidoreductase</keyword>
<keyword id="KW-1185">Reference proteome</keyword>
<keyword id="KW-0813">Transport</keyword>
<organism>
    <name type="scientific">Escherichia coli O6:H1 (strain CFT073 / ATCC 700928 / UPEC)</name>
    <dbReference type="NCBI Taxonomy" id="199310"/>
    <lineage>
        <taxon>Bacteria</taxon>
        <taxon>Pseudomonadati</taxon>
        <taxon>Pseudomonadota</taxon>
        <taxon>Gammaproteobacteria</taxon>
        <taxon>Enterobacterales</taxon>
        <taxon>Enterobacteriaceae</taxon>
        <taxon>Escherichia</taxon>
    </lineage>
</organism>
<name>FRE_ECOL6</name>
<evidence type="ECO:0000250" key="1"/>
<evidence type="ECO:0000250" key="2">
    <source>
        <dbReference type="UniProtKB" id="P0AEN1"/>
    </source>
</evidence>
<evidence type="ECO:0000250" key="3">
    <source>
        <dbReference type="UniProtKB" id="Q9L6L9"/>
    </source>
</evidence>
<evidence type="ECO:0000255" key="4">
    <source>
        <dbReference type="PROSITE-ProRule" id="PRU00716"/>
    </source>
</evidence>
<evidence type="ECO:0000305" key="5"/>
<gene>
    <name type="primary">fre</name>
    <name type="synonym">ubiB</name>
    <name type="ordered locus">c4791</name>
</gene>
<comment type="function">
    <text evidence="3">Catalyzes the reduction of soluble flavins by reduced pyridine nucleotides.</text>
</comment>
<comment type="catalytic activity">
    <reaction evidence="3">
        <text>reduced riboflavin + NADP(+) = riboflavin + NADPH + 2 H(+)</text>
        <dbReference type="Rhea" id="RHEA:19377"/>
        <dbReference type="ChEBI" id="CHEBI:15378"/>
        <dbReference type="ChEBI" id="CHEBI:17607"/>
        <dbReference type="ChEBI" id="CHEBI:57783"/>
        <dbReference type="ChEBI" id="CHEBI:57986"/>
        <dbReference type="ChEBI" id="CHEBI:58349"/>
        <dbReference type="EC" id="1.5.1.41"/>
    </reaction>
</comment>
<comment type="catalytic activity">
    <reaction evidence="3">
        <text>reduced riboflavin + NAD(+) = riboflavin + NADH + 2 H(+)</text>
        <dbReference type="Rhea" id="RHEA:31455"/>
        <dbReference type="ChEBI" id="CHEBI:15378"/>
        <dbReference type="ChEBI" id="CHEBI:17607"/>
        <dbReference type="ChEBI" id="CHEBI:57540"/>
        <dbReference type="ChEBI" id="CHEBI:57945"/>
        <dbReference type="ChEBI" id="CHEBI:57986"/>
        <dbReference type="EC" id="1.5.1.41"/>
    </reaction>
</comment>
<comment type="subunit">
    <text evidence="2">Monomer.</text>
</comment>
<comment type="similarity">
    <text evidence="5">Belongs to the Fre/LuxG FAD/NAD(P) flavoprotein oxidoreductase family.</text>
</comment>
<comment type="sequence caution" evidence="5">
    <conflict type="erroneous initiation">
        <sequence resource="EMBL-CDS" id="AAN83224"/>
    </conflict>
    <text>Extended N-terminus.</text>
</comment>
<dbReference type="EC" id="1.5.1.41" evidence="3"/>
<dbReference type="EMBL" id="AE014075">
    <property type="protein sequence ID" value="AAN83224.1"/>
    <property type="status" value="ALT_INIT"/>
    <property type="molecule type" value="Genomic_DNA"/>
</dbReference>
<dbReference type="RefSeq" id="WP_000209826.1">
    <property type="nucleotide sequence ID" value="NZ_CP051263.1"/>
</dbReference>
<dbReference type="SMR" id="P0AEN2"/>
<dbReference type="STRING" id="199310.c4791"/>
<dbReference type="GeneID" id="93778093"/>
<dbReference type="KEGG" id="ecc:c4791"/>
<dbReference type="eggNOG" id="COG0543">
    <property type="taxonomic scope" value="Bacteria"/>
</dbReference>
<dbReference type="HOGENOM" id="CLU_003827_7_4_6"/>
<dbReference type="Proteomes" id="UP000001410">
    <property type="component" value="Chromosome"/>
</dbReference>
<dbReference type="GO" id="GO:0042602">
    <property type="term" value="F:riboflavin reductase (NADPH) activity"/>
    <property type="evidence" value="ECO:0007669"/>
    <property type="project" value="RHEA"/>
</dbReference>
<dbReference type="GO" id="GO:0052875">
    <property type="term" value="F:riboflavin reductase [NAD(P)H] activity"/>
    <property type="evidence" value="ECO:0007669"/>
    <property type="project" value="UniProtKB-EC"/>
</dbReference>
<dbReference type="GO" id="GO:0006826">
    <property type="term" value="P:iron ion transport"/>
    <property type="evidence" value="ECO:0007669"/>
    <property type="project" value="UniProtKB-KW"/>
</dbReference>
<dbReference type="CDD" id="cd06189">
    <property type="entry name" value="flavin_oxioreductase"/>
    <property type="match status" value="1"/>
</dbReference>
<dbReference type="FunFam" id="2.40.30.10:FF:000042">
    <property type="entry name" value="NAD(P)H-flavin reductase"/>
    <property type="match status" value="1"/>
</dbReference>
<dbReference type="FunFam" id="3.40.50.80:FF:000016">
    <property type="entry name" value="NAD(P)H-flavin reductase"/>
    <property type="match status" value="1"/>
</dbReference>
<dbReference type="Gene3D" id="3.40.50.80">
    <property type="entry name" value="Nucleotide-binding domain of ferredoxin-NADP reductase (FNR) module"/>
    <property type="match status" value="1"/>
</dbReference>
<dbReference type="Gene3D" id="2.40.30.10">
    <property type="entry name" value="Translation factors"/>
    <property type="match status" value="1"/>
</dbReference>
<dbReference type="InterPro" id="IPR008333">
    <property type="entry name" value="Cbr1-like_FAD-bd_dom"/>
</dbReference>
<dbReference type="InterPro" id="IPR017927">
    <property type="entry name" value="FAD-bd_FR_type"/>
</dbReference>
<dbReference type="InterPro" id="IPR039261">
    <property type="entry name" value="FNR_nucleotide-bd"/>
</dbReference>
<dbReference type="InterPro" id="IPR001433">
    <property type="entry name" value="OxRdtase_FAD/NAD-bd"/>
</dbReference>
<dbReference type="InterPro" id="IPR017938">
    <property type="entry name" value="Riboflavin_synthase-like_b-brl"/>
</dbReference>
<dbReference type="NCBIfam" id="NF005963">
    <property type="entry name" value="PRK08051.1"/>
    <property type="match status" value="1"/>
</dbReference>
<dbReference type="PANTHER" id="PTHR43644">
    <property type="entry name" value="NA(+)-TRANSLOCATING NADH-QUINONE REDUCTASE SUBUNIT"/>
    <property type="match status" value="1"/>
</dbReference>
<dbReference type="PANTHER" id="PTHR43644:SF1">
    <property type="entry name" value="NAD(P)H-FLAVIN REDUCTASE"/>
    <property type="match status" value="1"/>
</dbReference>
<dbReference type="Pfam" id="PF00970">
    <property type="entry name" value="FAD_binding_6"/>
    <property type="match status" value="1"/>
</dbReference>
<dbReference type="Pfam" id="PF00175">
    <property type="entry name" value="NAD_binding_1"/>
    <property type="match status" value="1"/>
</dbReference>
<dbReference type="PRINTS" id="PR00410">
    <property type="entry name" value="PHEHYDRXLASE"/>
</dbReference>
<dbReference type="SUPFAM" id="SSF52343">
    <property type="entry name" value="Ferredoxin reductase-like, C-terminal NADP-linked domain"/>
    <property type="match status" value="1"/>
</dbReference>
<dbReference type="SUPFAM" id="SSF63380">
    <property type="entry name" value="Riboflavin synthase domain-like"/>
    <property type="match status" value="1"/>
</dbReference>
<dbReference type="PROSITE" id="PS51384">
    <property type="entry name" value="FAD_FR"/>
    <property type="match status" value="1"/>
</dbReference>
<feature type="initiator methionine" description="Removed" evidence="1">
    <location>
        <position position="1"/>
    </location>
</feature>
<feature type="chain" id="PRO_0000068146" description="NAD(P)H-flavin reductase">
    <location>
        <begin position="2"/>
        <end position="233"/>
    </location>
</feature>
<feature type="domain" description="FAD-binding FR-type" evidence="4">
    <location>
        <begin position="2"/>
        <end position="99"/>
    </location>
</feature>
<feature type="binding site" evidence="1">
    <location>
        <begin position="111"/>
        <end position="115"/>
    </location>
    <ligand>
        <name>pyridine</name>
        <dbReference type="ChEBI" id="CHEBI:16227"/>
    </ligand>
</feature>